<gene>
    <name type="primary">EHHADH</name>
    <name type="synonym">ECHD</name>
</gene>
<evidence type="ECO:0000250" key="1"/>
<evidence type="ECO:0000250" key="2">
    <source>
        <dbReference type="UniProtKB" id="P07896"/>
    </source>
</evidence>
<evidence type="ECO:0000250" key="3">
    <source>
        <dbReference type="UniProtKB" id="Q08426"/>
    </source>
</evidence>
<evidence type="ECO:0000250" key="4">
    <source>
        <dbReference type="UniProtKB" id="Q9DBM2"/>
    </source>
</evidence>
<evidence type="ECO:0000256" key="5">
    <source>
        <dbReference type="SAM" id="MobiDB-lite"/>
    </source>
</evidence>
<evidence type="ECO:0000305" key="6"/>
<dbReference type="EC" id="4.2.1.17"/>
<dbReference type="EC" id="5.3.3.8"/>
<dbReference type="EC" id="1.1.1.35"/>
<dbReference type="EMBL" id="CR860829">
    <property type="protein sequence ID" value="CAH92938.1"/>
    <property type="molecule type" value="mRNA"/>
</dbReference>
<dbReference type="RefSeq" id="NP_001127606.1">
    <property type="nucleotide sequence ID" value="NM_001134134.1"/>
</dbReference>
<dbReference type="SMR" id="Q5R5M8"/>
<dbReference type="FunCoup" id="Q5R5M8">
    <property type="interactions" value="951"/>
</dbReference>
<dbReference type="STRING" id="9601.ENSPPYP00000016064"/>
<dbReference type="GeneID" id="100174685"/>
<dbReference type="KEGG" id="pon:100174685"/>
<dbReference type="CTD" id="1962"/>
<dbReference type="eggNOG" id="KOG1683">
    <property type="taxonomic scope" value="Eukaryota"/>
</dbReference>
<dbReference type="InParanoid" id="Q5R5M8"/>
<dbReference type="OrthoDB" id="2018133at2759"/>
<dbReference type="UniPathway" id="UPA00659"/>
<dbReference type="Proteomes" id="UP000001595">
    <property type="component" value="Unplaced"/>
</dbReference>
<dbReference type="GO" id="GO:0005777">
    <property type="term" value="C:peroxisome"/>
    <property type="evidence" value="ECO:0000250"/>
    <property type="project" value="UniProtKB"/>
</dbReference>
<dbReference type="GO" id="GO:0003857">
    <property type="term" value="F:3-hydroxyacyl-CoA dehydrogenase activity"/>
    <property type="evidence" value="ECO:0000250"/>
    <property type="project" value="UniProtKB"/>
</dbReference>
<dbReference type="GO" id="GO:0004165">
    <property type="term" value="F:delta(3)-delta(2)-enoyl-CoA isomerase activity"/>
    <property type="evidence" value="ECO:0000250"/>
    <property type="project" value="UniProtKB"/>
</dbReference>
<dbReference type="GO" id="GO:0004300">
    <property type="term" value="F:enoyl-CoA hydratase activity"/>
    <property type="evidence" value="ECO:0000250"/>
    <property type="project" value="UniProtKB"/>
</dbReference>
<dbReference type="GO" id="GO:0016863">
    <property type="term" value="F:intramolecular oxidoreductase activity, transposing C=C bonds"/>
    <property type="evidence" value="ECO:0000250"/>
    <property type="project" value="UniProtKB"/>
</dbReference>
<dbReference type="GO" id="GO:0016509">
    <property type="term" value="F:long-chain-3-hydroxyacyl-CoA dehydrogenase activity"/>
    <property type="evidence" value="ECO:0000250"/>
    <property type="project" value="UniProtKB"/>
</dbReference>
<dbReference type="GO" id="GO:0070403">
    <property type="term" value="F:NAD+ binding"/>
    <property type="evidence" value="ECO:0007669"/>
    <property type="project" value="InterPro"/>
</dbReference>
<dbReference type="GO" id="GO:0006635">
    <property type="term" value="P:fatty acid beta-oxidation"/>
    <property type="evidence" value="ECO:0000250"/>
    <property type="project" value="UniProtKB"/>
</dbReference>
<dbReference type="CDD" id="cd06558">
    <property type="entry name" value="crotonase-like"/>
    <property type="match status" value="1"/>
</dbReference>
<dbReference type="FunFam" id="1.10.1040.50:FF:000006">
    <property type="entry name" value="Peroxisomal bifunctional enzyme"/>
    <property type="match status" value="1"/>
</dbReference>
<dbReference type="FunFam" id="3.90.226.10:FF:000052">
    <property type="entry name" value="Peroxisomal bifunctional enzyme"/>
    <property type="match status" value="1"/>
</dbReference>
<dbReference type="FunFam" id="3.40.50.720:FF:000296">
    <property type="entry name" value="peroxisomal bifunctional enzyme isoform X1"/>
    <property type="match status" value="1"/>
</dbReference>
<dbReference type="Gene3D" id="1.10.1040.50">
    <property type="match status" value="1"/>
</dbReference>
<dbReference type="Gene3D" id="3.90.226.10">
    <property type="entry name" value="2-enoyl-CoA Hydratase, Chain A, domain 1"/>
    <property type="match status" value="1"/>
</dbReference>
<dbReference type="Gene3D" id="3.40.50.720">
    <property type="entry name" value="NAD(P)-binding Rossmann-like Domain"/>
    <property type="match status" value="1"/>
</dbReference>
<dbReference type="InterPro" id="IPR006180">
    <property type="entry name" value="3-OHacyl-CoA_DH_CS"/>
</dbReference>
<dbReference type="InterPro" id="IPR006176">
    <property type="entry name" value="3-OHacyl-CoA_DH_NAD-bd"/>
</dbReference>
<dbReference type="InterPro" id="IPR006108">
    <property type="entry name" value="3HC_DH_C"/>
</dbReference>
<dbReference type="InterPro" id="IPR008927">
    <property type="entry name" value="6-PGluconate_DH-like_C_sf"/>
</dbReference>
<dbReference type="InterPro" id="IPR029045">
    <property type="entry name" value="ClpP/crotonase-like_dom_sf"/>
</dbReference>
<dbReference type="InterPro" id="IPR018376">
    <property type="entry name" value="Enoyl-CoA_hyd/isom_CS"/>
</dbReference>
<dbReference type="InterPro" id="IPR001753">
    <property type="entry name" value="Enoyl-CoA_hydra/iso"/>
</dbReference>
<dbReference type="InterPro" id="IPR036291">
    <property type="entry name" value="NAD(P)-bd_dom_sf"/>
</dbReference>
<dbReference type="PANTHER" id="PTHR23309">
    <property type="entry name" value="3-HYDROXYACYL-COA DEHYROGENASE"/>
    <property type="match status" value="1"/>
</dbReference>
<dbReference type="PANTHER" id="PTHR23309:SF49">
    <property type="entry name" value="PEROXISOMAL BIFUNCTIONAL ENZYME"/>
    <property type="match status" value="1"/>
</dbReference>
<dbReference type="Pfam" id="PF00725">
    <property type="entry name" value="3HCDH"/>
    <property type="match status" value="2"/>
</dbReference>
<dbReference type="Pfam" id="PF02737">
    <property type="entry name" value="3HCDH_N"/>
    <property type="match status" value="1"/>
</dbReference>
<dbReference type="Pfam" id="PF00378">
    <property type="entry name" value="ECH_1"/>
    <property type="match status" value="1"/>
</dbReference>
<dbReference type="SUPFAM" id="SSF48179">
    <property type="entry name" value="6-phosphogluconate dehydrogenase C-terminal domain-like"/>
    <property type="match status" value="2"/>
</dbReference>
<dbReference type="SUPFAM" id="SSF52096">
    <property type="entry name" value="ClpP/crotonase"/>
    <property type="match status" value="1"/>
</dbReference>
<dbReference type="SUPFAM" id="SSF51735">
    <property type="entry name" value="NAD(P)-binding Rossmann-fold domains"/>
    <property type="match status" value="1"/>
</dbReference>
<dbReference type="PROSITE" id="PS00067">
    <property type="entry name" value="3HCDH"/>
    <property type="match status" value="1"/>
</dbReference>
<dbReference type="PROSITE" id="PS00166">
    <property type="entry name" value="ENOYL_COA_HYDRATASE"/>
    <property type="match status" value="1"/>
</dbReference>
<feature type="chain" id="PRO_0000353181" description="Peroxisomal bifunctional enzyme">
    <location>
        <begin position="1"/>
        <end position="723"/>
    </location>
</feature>
<feature type="region of interest" description="Enoyl-CoA hydratase / isomerase">
    <location>
        <begin position="1"/>
        <end position="282"/>
    </location>
</feature>
<feature type="region of interest" description="3-hydroxyacyl-CoA dehydrogenase">
    <location>
        <begin position="283"/>
        <end position="572"/>
    </location>
</feature>
<feature type="region of interest" description="Disordered" evidence="5">
    <location>
        <begin position="699"/>
        <end position="723"/>
    </location>
</feature>
<feature type="short sequence motif" description="Microbody targeting signal" evidence="1">
    <location>
        <begin position="721"/>
        <end position="723"/>
    </location>
</feature>
<feature type="compositionally biased region" description="Polar residues" evidence="5">
    <location>
        <begin position="703"/>
        <end position="723"/>
    </location>
</feature>
<feature type="binding site" evidence="1">
    <location>
        <position position="101"/>
    </location>
    <ligand>
        <name>substrate</name>
    </ligand>
</feature>
<feature type="site" description="Important for catalytic activity" evidence="1">
    <location>
        <position position="104"/>
    </location>
</feature>
<feature type="site" description="Important for catalytic activity" evidence="1">
    <location>
        <position position="124"/>
    </location>
</feature>
<feature type="modified residue" description="N6-succinyllysine" evidence="4">
    <location>
        <position position="38"/>
    </location>
</feature>
<feature type="modified residue" description="N6-acetyllysine; alternate" evidence="3">
    <location>
        <position position="165"/>
    </location>
</feature>
<feature type="modified residue" description="N6-succinyllysine; alternate" evidence="4">
    <location>
        <position position="165"/>
    </location>
</feature>
<feature type="modified residue" description="N6-acetyllysine" evidence="3">
    <location>
        <position position="171"/>
    </location>
</feature>
<feature type="modified residue" description="N6-acetyllysine; alternate" evidence="4">
    <location>
        <position position="219"/>
    </location>
</feature>
<feature type="modified residue" description="N6-succinyllysine; alternate" evidence="4">
    <location>
        <position position="219"/>
    </location>
</feature>
<feature type="modified residue" description="N6-acetyllysine" evidence="4">
    <location>
        <position position="250"/>
    </location>
</feature>
<feature type="modified residue" description="N6-succinyllysine" evidence="4">
    <location>
        <position position="280"/>
    </location>
</feature>
<feature type="modified residue" description="N6-succinyllysine" evidence="4">
    <location>
        <position position="290"/>
    </location>
</feature>
<feature type="modified residue" description="N6-acetyllysine" evidence="3">
    <location>
        <position position="346"/>
    </location>
</feature>
<feature type="modified residue" description="N6-acetyllysine" evidence="4">
    <location>
        <position position="350"/>
    </location>
</feature>
<feature type="modified residue" description="N6-acetyllysine" evidence="4">
    <location>
        <position position="464"/>
    </location>
</feature>
<feature type="modified residue" description="N6-succinyllysine" evidence="4">
    <location>
        <position position="532"/>
    </location>
</feature>
<feature type="modified residue" description="Phosphothreonine" evidence="3">
    <location>
        <position position="548"/>
    </location>
</feature>
<feature type="modified residue" description="N6-succinyllysine" evidence="4">
    <location>
        <position position="577"/>
    </location>
</feature>
<feature type="modified residue" description="N6-acetyllysine; alternate" evidence="3">
    <location>
        <position position="584"/>
    </location>
</feature>
<feature type="modified residue" description="N6-succinyllysine; alternate" evidence="4">
    <location>
        <position position="584"/>
    </location>
</feature>
<feature type="modified residue" description="N6-acetyllysine; alternate" evidence="4">
    <location>
        <position position="591"/>
    </location>
</feature>
<feature type="modified residue" description="N6-succinyllysine; alternate" evidence="4">
    <location>
        <position position="591"/>
    </location>
</feature>
<feature type="modified residue" description="N6-acetyllysine; alternate" evidence="4">
    <location>
        <position position="710"/>
    </location>
</feature>
<feature type="modified residue" description="N6-succinyllysine; alternate" evidence="4">
    <location>
        <position position="710"/>
    </location>
</feature>
<feature type="modified residue" description="Phosphoserine" evidence="3">
    <location>
        <position position="718"/>
    </location>
</feature>
<feature type="modified residue" description="N6-succinyllysine" evidence="4">
    <location>
        <position position="722"/>
    </location>
</feature>
<keyword id="KW-0007">Acetylation</keyword>
<keyword id="KW-0276">Fatty acid metabolism</keyword>
<keyword id="KW-0413">Isomerase</keyword>
<keyword id="KW-0443">Lipid metabolism</keyword>
<keyword id="KW-0456">Lyase</keyword>
<keyword id="KW-0511">Multifunctional enzyme</keyword>
<keyword id="KW-0520">NAD</keyword>
<keyword id="KW-0560">Oxidoreductase</keyword>
<keyword id="KW-0576">Peroxisome</keyword>
<keyword id="KW-0597">Phosphoprotein</keyword>
<keyword id="KW-1185">Reference proteome</keyword>
<comment type="function">
    <text evidence="2 3 4">Peroxisomal trifunctional enzyme possessing 2-enoyl-CoA hydratase, 3-hydroxyacyl-CoA dehydrogenase, and delta 3, delta 2-enoyl-CoA isomerase activities. Catalyzes two of the four reactions of the long chain fatty acids peroxisomal beta-oxidation pathway (By similarity). Can also use branched-chain fatty acids such as 2-methyl-2E-butenoyl-CoA as a substrate, which is hydrated into (2S,3S)-3-hydroxy-2-methylbutanoyl-CoA (By similarity). Optimal isomerase for 2,5 double bonds into 3,5 form isomerization in a range of enoyl-CoA species. Also able to isomerize both 3-cis and 3-trans double bonds into the 2-trans form in a range of enoyl-CoA species (By similarity). Regulates the amount of medium-chain dicarboxylic fatty acids which are essential regulators of all fatty acid oxidation pathways (By similarity). Also involved in the degradation of long-chain dicarboxylic acids through peroxisomal beta-oxidation (By similarity).</text>
</comment>
<comment type="catalytic activity">
    <reaction evidence="3">
        <text>a (3S)-3-hydroxyacyl-CoA = a (2E)-enoyl-CoA + H2O</text>
        <dbReference type="Rhea" id="RHEA:16105"/>
        <dbReference type="ChEBI" id="CHEBI:15377"/>
        <dbReference type="ChEBI" id="CHEBI:57318"/>
        <dbReference type="ChEBI" id="CHEBI:58856"/>
        <dbReference type="EC" id="4.2.1.17"/>
    </reaction>
    <physiologicalReaction direction="left-to-right" evidence="3">
        <dbReference type="Rhea" id="RHEA:16106"/>
    </physiologicalReaction>
</comment>
<comment type="catalytic activity">
    <reaction evidence="2">
        <text>a 4-saturated-(3S)-3-hydroxyacyl-CoA = a (3E)-enoyl-CoA + H2O</text>
        <dbReference type="Rhea" id="RHEA:20724"/>
        <dbReference type="ChEBI" id="CHEBI:15377"/>
        <dbReference type="ChEBI" id="CHEBI:58521"/>
        <dbReference type="ChEBI" id="CHEBI:137480"/>
        <dbReference type="EC" id="4.2.1.17"/>
    </reaction>
    <physiologicalReaction direction="left-to-right" evidence="2">
        <dbReference type="Rhea" id="RHEA:20725"/>
    </physiologicalReaction>
</comment>
<comment type="catalytic activity">
    <reaction evidence="2">
        <text>a (3Z)-enoyl-CoA = a 4-saturated (2E)-enoyl-CoA</text>
        <dbReference type="Rhea" id="RHEA:45900"/>
        <dbReference type="ChEBI" id="CHEBI:85097"/>
        <dbReference type="ChEBI" id="CHEBI:85489"/>
        <dbReference type="EC" id="5.3.3.8"/>
    </reaction>
    <physiologicalReaction direction="left-to-right" evidence="2">
        <dbReference type="Rhea" id="RHEA:45901"/>
    </physiologicalReaction>
</comment>
<comment type="catalytic activity">
    <reaction evidence="2">
        <text>a (3E)-enoyl-CoA = a 4-saturated (2E)-enoyl-CoA</text>
        <dbReference type="Rhea" id="RHEA:45228"/>
        <dbReference type="ChEBI" id="CHEBI:58521"/>
        <dbReference type="ChEBI" id="CHEBI:85097"/>
        <dbReference type="EC" id="5.3.3.8"/>
    </reaction>
    <physiologicalReaction direction="left-to-right" evidence="2">
        <dbReference type="Rhea" id="RHEA:45229"/>
    </physiologicalReaction>
</comment>
<comment type="catalytic activity">
    <reaction evidence="3">
        <text>a (3S)-3-hydroxyacyl-CoA + NAD(+) = a 3-oxoacyl-CoA + NADH + H(+)</text>
        <dbReference type="Rhea" id="RHEA:22432"/>
        <dbReference type="ChEBI" id="CHEBI:15378"/>
        <dbReference type="ChEBI" id="CHEBI:57318"/>
        <dbReference type="ChEBI" id="CHEBI:57540"/>
        <dbReference type="ChEBI" id="CHEBI:57945"/>
        <dbReference type="ChEBI" id="CHEBI:90726"/>
        <dbReference type="EC" id="1.1.1.35"/>
    </reaction>
    <physiologicalReaction direction="left-to-right" evidence="3">
        <dbReference type="Rhea" id="RHEA:22433"/>
    </physiologicalReaction>
</comment>
<comment type="catalytic activity">
    <reaction evidence="2">
        <text>(2S,3S)-3-hydroxy-2-methylbutanoyl-CoA = (2E)-2-methylbut-2-enoyl-CoA + H2O</text>
        <dbReference type="Rhea" id="RHEA:31119"/>
        <dbReference type="ChEBI" id="CHEBI:15377"/>
        <dbReference type="ChEBI" id="CHEBI:57312"/>
        <dbReference type="ChEBI" id="CHEBI:57337"/>
    </reaction>
    <physiologicalReaction direction="right-to-left" evidence="2">
        <dbReference type="Rhea" id="RHEA:31121"/>
    </physiologicalReaction>
</comment>
<comment type="catalytic activity">
    <reaction evidence="3">
        <text>(3S)-hydroxyhexadecanoyl-CoA + NAD(+) = 3-oxohexadecanoyl-CoA + NADH + H(+)</text>
        <dbReference type="Rhea" id="RHEA:31159"/>
        <dbReference type="ChEBI" id="CHEBI:15378"/>
        <dbReference type="ChEBI" id="CHEBI:57349"/>
        <dbReference type="ChEBI" id="CHEBI:57540"/>
        <dbReference type="ChEBI" id="CHEBI:57945"/>
        <dbReference type="ChEBI" id="CHEBI:62613"/>
    </reaction>
    <physiologicalReaction direction="left-to-right" evidence="3">
        <dbReference type="Rhea" id="RHEA:31160"/>
    </physiologicalReaction>
</comment>
<comment type="catalytic activity">
    <reaction evidence="3">
        <text>(3S)-hydroxyhexadecanoyl-CoA = (2E)-hexadecenoyl-CoA + H2O</text>
        <dbReference type="Rhea" id="RHEA:31163"/>
        <dbReference type="ChEBI" id="CHEBI:15377"/>
        <dbReference type="ChEBI" id="CHEBI:61526"/>
        <dbReference type="ChEBI" id="CHEBI:62613"/>
    </reaction>
    <physiologicalReaction direction="right-to-left" evidence="3">
        <dbReference type="Rhea" id="RHEA:31165"/>
    </physiologicalReaction>
</comment>
<comment type="catalytic activity">
    <reaction evidence="3">
        <text>(2E)-hexadecenedioyl-CoA + H2O = (3S)-hydroxyhexadecanedioyl-CoA</text>
        <dbReference type="Rhea" id="RHEA:40259"/>
        <dbReference type="ChEBI" id="CHEBI:15377"/>
        <dbReference type="ChEBI" id="CHEBI:77075"/>
        <dbReference type="ChEBI" id="CHEBI:77080"/>
    </reaction>
    <physiologicalReaction direction="left-to-right" evidence="3">
        <dbReference type="Rhea" id="RHEA:40260"/>
    </physiologicalReaction>
</comment>
<comment type="catalytic activity">
    <reaction evidence="3">
        <text>(3S)-hydroxyhexadecanedioyl-CoA + NAD(+) = 3-oxohexadecanedioyl-CoA + NADH + H(+)</text>
        <dbReference type="Rhea" id="RHEA:40267"/>
        <dbReference type="ChEBI" id="CHEBI:15378"/>
        <dbReference type="ChEBI" id="CHEBI:57540"/>
        <dbReference type="ChEBI" id="CHEBI:57945"/>
        <dbReference type="ChEBI" id="CHEBI:77080"/>
        <dbReference type="ChEBI" id="CHEBI:77081"/>
    </reaction>
    <physiologicalReaction direction="left-to-right" evidence="3">
        <dbReference type="Rhea" id="RHEA:40268"/>
    </physiologicalReaction>
</comment>
<comment type="catalytic activity">
    <reaction evidence="2">
        <text>(3E,5Z)-tetradecadienoyl-CoA = (2E,5Z)-tetradecadienoyl-CoA</text>
        <dbReference type="Rhea" id="RHEA:47464"/>
        <dbReference type="ChEBI" id="CHEBI:71586"/>
        <dbReference type="ChEBI" id="CHEBI:87701"/>
    </reaction>
    <physiologicalReaction direction="right-to-left" evidence="2">
        <dbReference type="Rhea" id="RHEA:47466"/>
    </physiologicalReaction>
</comment>
<comment type="catalytic activity">
    <reaction evidence="2">
        <text>(3E,5Z)-octadienoyl-CoA = (2E,5Z)-octadienoyl-CoA</text>
        <dbReference type="Rhea" id="RHEA:49932"/>
        <dbReference type="ChEBI" id="CHEBI:85108"/>
        <dbReference type="ChEBI" id="CHEBI:131990"/>
    </reaction>
    <physiologicalReaction direction="right-to-left" evidence="2">
        <dbReference type="Rhea" id="RHEA:49934"/>
    </physiologicalReaction>
</comment>
<comment type="catalytic activity">
    <reaction evidence="2">
        <text>(3S)-hydroxydecanoyl-CoA + NAD(+) = 3-oxodecanoyl-CoA + NADH + H(+)</text>
        <dbReference type="Rhea" id="RHEA:31187"/>
        <dbReference type="ChEBI" id="CHEBI:15378"/>
        <dbReference type="ChEBI" id="CHEBI:57540"/>
        <dbReference type="ChEBI" id="CHEBI:57945"/>
        <dbReference type="ChEBI" id="CHEBI:62548"/>
        <dbReference type="ChEBI" id="CHEBI:62616"/>
    </reaction>
    <physiologicalReaction direction="left-to-right" evidence="2">
        <dbReference type="Rhea" id="RHEA:31188"/>
    </physiologicalReaction>
</comment>
<comment type="catalytic activity">
    <reaction evidence="2">
        <text>(3E)-decenoyl-CoA = (2E)-decenoyl-CoA</text>
        <dbReference type="Rhea" id="RHEA:45752"/>
        <dbReference type="ChEBI" id="CHEBI:61406"/>
        <dbReference type="ChEBI" id="CHEBI:84793"/>
    </reaction>
    <physiologicalReaction direction="left-to-right" evidence="2">
        <dbReference type="Rhea" id="RHEA:45753"/>
    </physiologicalReaction>
</comment>
<comment type="catalytic activity">
    <reaction evidence="2">
        <text>(3Z)-hexenoyl-CoA = (2E)-hexenoyl-CoA</text>
        <dbReference type="Rhea" id="RHEA:45748"/>
        <dbReference type="ChEBI" id="CHEBI:62077"/>
        <dbReference type="ChEBI" id="CHEBI:85415"/>
    </reaction>
    <physiologicalReaction direction="left-to-right" evidence="2">
        <dbReference type="Rhea" id="RHEA:45749"/>
    </physiologicalReaction>
</comment>
<comment type="catalytic activity">
    <reaction evidence="2">
        <text>(3E)-hexenoyl-CoA = (2E)-hexenoyl-CoA</text>
        <dbReference type="Rhea" id="RHEA:45736"/>
        <dbReference type="ChEBI" id="CHEBI:62077"/>
        <dbReference type="ChEBI" id="CHEBI:84790"/>
    </reaction>
    <physiologicalReaction direction="left-to-right" evidence="2">
        <dbReference type="Rhea" id="RHEA:45737"/>
    </physiologicalReaction>
</comment>
<comment type="catalytic activity">
    <reaction evidence="2">
        <text>(3S)-hydroxydecanoyl-CoA = (2E)-decenoyl-CoA + H2O</text>
        <dbReference type="Rhea" id="RHEA:31191"/>
        <dbReference type="ChEBI" id="CHEBI:15377"/>
        <dbReference type="ChEBI" id="CHEBI:61406"/>
        <dbReference type="ChEBI" id="CHEBI:62616"/>
    </reaction>
    <physiologicalReaction direction="right-to-left" evidence="2">
        <dbReference type="Rhea" id="RHEA:31193"/>
    </physiologicalReaction>
</comment>
<comment type="catalytic activity">
    <reaction evidence="2">
        <text>(3S)-hydroxyhexanoyl-CoA = (2E)-hexenoyl-CoA + H2O</text>
        <dbReference type="Rhea" id="RHEA:30547"/>
        <dbReference type="ChEBI" id="CHEBI:15377"/>
        <dbReference type="ChEBI" id="CHEBI:62075"/>
        <dbReference type="ChEBI" id="CHEBI:62077"/>
    </reaction>
    <physiologicalReaction direction="right-to-left" evidence="2">
        <dbReference type="Rhea" id="RHEA:30549"/>
    </physiologicalReaction>
</comment>
<comment type="activity regulation">
    <text evidence="3">Enzyme activity enhanced by acetylation.</text>
</comment>
<comment type="pathway">
    <text evidence="3">Lipid metabolism; fatty acid beta-oxidation.</text>
</comment>
<comment type="subunit">
    <text evidence="2">Monomer.</text>
</comment>
<comment type="subcellular location">
    <subcellularLocation>
        <location evidence="3">Peroxisome</location>
    </subcellularLocation>
</comment>
<comment type="PTM">
    <text evidence="3">Acetylated, leading to enhanced enzyme activity. Acetylation is enhanced by up to 80% after treatment either with trichostin A (TSA) or with nicotinamide (NAM) with highest increase on Lys-346. Acetylation and enzyme activity increased by about 1.5% on addition of fatty acids.</text>
</comment>
<comment type="similarity">
    <text evidence="6">In the N-terminal section; belongs to the enoyl-CoA hydratase/isomerase family.</text>
</comment>
<comment type="similarity">
    <text evidence="6">In the C-terminal section; belongs to the 3-hydroxyacyl-CoA dehydrogenase family.</text>
</comment>
<accession>Q5R5M8</accession>
<proteinExistence type="evidence at transcript level"/>
<name>ECHP_PONAB</name>
<organism>
    <name type="scientific">Pongo abelii</name>
    <name type="common">Sumatran orangutan</name>
    <name type="synonym">Pongo pygmaeus abelii</name>
    <dbReference type="NCBI Taxonomy" id="9601"/>
    <lineage>
        <taxon>Eukaryota</taxon>
        <taxon>Metazoa</taxon>
        <taxon>Chordata</taxon>
        <taxon>Craniata</taxon>
        <taxon>Vertebrata</taxon>
        <taxon>Euteleostomi</taxon>
        <taxon>Mammalia</taxon>
        <taxon>Eutheria</taxon>
        <taxon>Euarchontoglires</taxon>
        <taxon>Primates</taxon>
        <taxon>Haplorrhini</taxon>
        <taxon>Catarrhini</taxon>
        <taxon>Hominidae</taxon>
        <taxon>Pongo</taxon>
    </lineage>
</organism>
<sequence length="723" mass="79481">MAEYTRLHNALALIRLRNPPVNAISTALLRDIKEGLQKAVIDHTIKAIVICGAEGKFSAGADIHGFSAPRTFGFTLGHVVDEIQRNEKPVVAAIQGMAFGGGLELALGCHYRIAHSEAQVGLPEVTLGLLPGARGTQLLPRLIGVPAALDLITSGRHILADEALKLGILDKVVNSDPVEEAIRFAQRVSDQPLESRRLCNKPIQSLPNMDTIFSEALLKMRRQHPGCLAQEACVRAVQAAVQYPYEVGVKKEEELFLYLFQSGQARALQYAFLAERKANKWSTPSGASWKTASARPVSSVGVVGLGTMGRGIVISFARARIPVIAVDSDKNQLATANKMITSVLEKEASKMQQSGHPWSGPKPRLTSSMKELGGVDLVIEAVFEEMSLKKQVFAELSAICKPEAFLCTNTSALDVDEIASSTDRPHLVIGTHFFSPAHVMKLLEVIPSQYSSPTTIATVMNLSKKIKKIGVVVGNCFGFVGNRMLNPYYNQAYFLLEEGSKPEEVDQVLEEFGFKMGPFRVSDLAGLDVGWKSRKGQGLTGPTLPPGTPARKRGNRRYCPIPDVLCELGRFGQKTGKGWYQYDKPLGRIHKADPWLSKFLSQYRETHHIEPRTISQDEILERCLYSLINEAFRILGEGIAASPEHIDVVYLHGYGWPRHKGGPMFYASTVGLPTVLEKLQKYYRQNPDIPQLEPSDYLKKLASQGNPPQKEWQSLAGSPSSKL</sequence>
<reference key="1">
    <citation type="submission" date="2004-11" db="EMBL/GenBank/DDBJ databases">
        <authorList>
            <consortium name="The German cDNA consortium"/>
        </authorList>
    </citation>
    <scope>NUCLEOTIDE SEQUENCE [LARGE SCALE MRNA]</scope>
    <source>
        <tissue>Kidney</tissue>
    </source>
</reference>
<protein>
    <recommendedName>
        <fullName>Peroxisomal bifunctional enzyme</fullName>
        <shortName>PBE</shortName>
        <shortName>PBFE</shortName>
    </recommendedName>
    <alternativeName>
        <fullName>Multifunctional enzyme 1</fullName>
        <shortName>MFE1</shortName>
    </alternativeName>
    <domain>
        <recommendedName>
            <fullName>Enoyl-CoA hydratase/3,2-trans-enoyl-CoA isomerase</fullName>
            <ecNumber>4.2.1.17</ecNumber>
            <ecNumber>5.3.3.8</ecNumber>
        </recommendedName>
    </domain>
    <domain>
        <recommendedName>
            <fullName>3-hydroxyacyl-CoA dehydrogenase</fullName>
            <ecNumber>1.1.1.35</ecNumber>
        </recommendedName>
    </domain>
</protein>